<protein>
    <recommendedName>
        <fullName>Regulator of G-protein signaling 16</fullName>
        <shortName>RGS16</shortName>
    </recommendedName>
    <alternativeName>
        <fullName>A28-RGS14P</fullName>
    </alternativeName>
    <alternativeName>
        <fullName>Retinal-specific RGS</fullName>
        <shortName>RGS-r</shortName>
        <shortName>hRGS-r</shortName>
    </alternativeName>
    <alternativeName>
        <fullName>Retinally abundant regulator of G-protein signaling</fullName>
    </alternativeName>
</protein>
<feature type="chain" id="PRO_0000204221" description="Regulator of G-protein signaling 16">
    <location>
        <begin position="1"/>
        <end position="202"/>
    </location>
</feature>
<feature type="domain" description="RGS" evidence="2">
    <location>
        <begin position="65"/>
        <end position="181"/>
    </location>
</feature>
<feature type="modified residue" description="Phosphotyrosine; by EGFR" evidence="3">
    <location>
        <position position="168"/>
    </location>
</feature>
<feature type="modified residue" description="Phosphotyrosine" evidence="3">
    <location>
        <position position="177"/>
    </location>
</feature>
<feature type="lipid moiety-binding region" description="S-palmitoyl cysteine" evidence="1">
    <location>
        <position position="2"/>
    </location>
</feature>
<feature type="lipid moiety-binding region" description="S-palmitoyl cysteine" evidence="1">
    <location>
        <position position="12"/>
    </location>
</feature>
<feature type="sequence variant" id="VAR_046528" description="In dbSNP:rs1144566." evidence="4 5 7 8 9 10 11">
    <original>H</original>
    <variation>R</variation>
    <location>
        <position position="137"/>
    </location>
</feature>
<feature type="mutagenesis site" description="30% decrease in GAP activity." evidence="3">
    <original>Y</original>
    <variation>F</variation>
    <location>
        <position position="168"/>
    </location>
</feature>
<feature type="mutagenesis site" description="No effect on GAP activity." evidence="3">
    <original>Y</original>
    <variation>F</variation>
    <location>
        <position position="177"/>
    </location>
</feature>
<feature type="sequence conflict" description="In Ref. 1; AAC16912." evidence="12" ref="1">
    <original>F</original>
    <variation>S</variation>
    <location>
        <position position="42"/>
    </location>
</feature>
<feature type="helix" evidence="13">
    <location>
        <begin position="53"/>
        <end position="62"/>
    </location>
</feature>
<feature type="helix" evidence="13">
    <location>
        <begin position="66"/>
        <end position="70"/>
    </location>
</feature>
<feature type="helix" evidence="13">
    <location>
        <begin position="73"/>
        <end position="85"/>
    </location>
</feature>
<feature type="helix" evidence="13">
    <location>
        <begin position="89"/>
        <end position="101"/>
    </location>
</feature>
<feature type="helix" evidence="13">
    <location>
        <begin position="107"/>
        <end position="121"/>
    </location>
</feature>
<feature type="helix" evidence="13">
    <location>
        <begin position="134"/>
        <end position="143"/>
    </location>
</feature>
<feature type="helix" evidence="13">
    <location>
        <begin position="144"/>
        <end position="146"/>
    </location>
</feature>
<feature type="turn" evidence="13">
    <location>
        <begin position="149"/>
        <end position="152"/>
    </location>
</feature>
<feature type="helix" evidence="13">
    <location>
        <begin position="153"/>
        <end position="165"/>
    </location>
</feature>
<feature type="helix" evidence="13">
    <location>
        <begin position="167"/>
        <end position="173"/>
    </location>
</feature>
<feature type="helix" evidence="13">
    <location>
        <begin position="175"/>
        <end position="186"/>
    </location>
</feature>
<sequence length="202" mass="22749">MCRTLAAFPTTCLERAKEFKTRLGIFLHKSELGCDTGSTGKFEWGSKHSKENRNFSEDVLGWRESFDLLLSSKNGVAAFHAFLKTEFSEENLEFWLACEEFKKIRSATKLASRAHQIFEEFICSEAPKEVNIDHETHELTRMNLQTATATCFDAAQGKTRTLMEKDSYPRFLKSPAYRDLAAQASAASATLSSCSLDEPSHT</sequence>
<name>RGS16_HUMAN</name>
<proteinExistence type="evidence at protein level"/>
<gene>
    <name type="primary">RGS16</name>
    <name type="synonym">RGSR</name>
</gene>
<evidence type="ECO:0000250" key="1">
    <source>
        <dbReference type="UniProtKB" id="P97428"/>
    </source>
</evidence>
<evidence type="ECO:0000255" key="2">
    <source>
        <dbReference type="PROSITE-ProRule" id="PRU00171"/>
    </source>
</evidence>
<evidence type="ECO:0000269" key="3">
    <source>
    </source>
</evidence>
<evidence type="ECO:0000269" key="4">
    <source>
    </source>
</evidence>
<evidence type="ECO:0000269" key="5">
    <source>
    </source>
</evidence>
<evidence type="ECO:0000269" key="6">
    <source>
    </source>
</evidence>
<evidence type="ECO:0000269" key="7">
    <source>
    </source>
</evidence>
<evidence type="ECO:0000269" key="8">
    <source>
    </source>
</evidence>
<evidence type="ECO:0000269" key="9">
    <source ref="3"/>
</evidence>
<evidence type="ECO:0000269" key="10">
    <source ref="4"/>
</evidence>
<evidence type="ECO:0000269" key="11">
    <source ref="7"/>
</evidence>
<evidence type="ECO:0000305" key="12"/>
<evidence type="ECO:0007829" key="13">
    <source>
        <dbReference type="PDB" id="2BT2"/>
    </source>
</evidence>
<comment type="function">
    <text evidence="1 3 6">Regulates G protein-coupled receptor signaling cascades. Inhibits signal transduction by increasing the GTPase activity of G protein alpha subunits, thereby driving them into their inactive GDP-bound form (PubMed:11602604, PubMed:18434541). Plays an important role in the phototransduction cascade by regulating the lifetime and effective concentration of activated transducin alpha. May regulate extra and intracellular mitogenic signals (By similarity).</text>
</comment>
<comment type="subunit">
    <text evidence="1 6">Interacts with GNAI1 and GNAQ (PubMed:18434541). Interacts with GNAI2, GNAI3 and GNAO1 (By similarity).</text>
</comment>
<comment type="subcellular location">
    <subcellularLocation>
        <location evidence="1">Membrane</location>
        <topology evidence="1">Lipid-anchor</topology>
    </subcellularLocation>
</comment>
<comment type="tissue specificity">
    <text>Abundantly expressed in retina with lower levels of expression in most other tissues.</text>
</comment>
<comment type="PTM">
    <text evidence="1">Palmitoylated on Cys-2 and/or Cys-12.</text>
</comment>
<comment type="PTM">
    <text evidence="3">Phosphorylated. Phosphorylation at Tyr-168 by EGFR enhances GTPase accelerating (GAP) activity toward GNAI1.</text>
</comment>
<dbReference type="EMBL" id="U70426">
    <property type="protein sequence ID" value="AAC16912.1"/>
    <property type="molecule type" value="mRNA"/>
</dbReference>
<dbReference type="EMBL" id="U94829">
    <property type="protein sequence ID" value="AAC52040.1"/>
    <property type="molecule type" value="mRNA"/>
</dbReference>
<dbReference type="EMBL" id="AF009356">
    <property type="protein sequence ID" value="AAC39642.1"/>
    <property type="molecule type" value="Genomic_DNA"/>
</dbReference>
<dbReference type="EMBL" id="AF493937">
    <property type="protein sequence ID" value="AAM12651.1"/>
    <property type="molecule type" value="mRNA"/>
</dbReference>
<dbReference type="EMBL" id="BT006638">
    <property type="protein sequence ID" value="AAP35284.1"/>
    <property type="molecule type" value="mRNA"/>
</dbReference>
<dbReference type="EMBL" id="AK311880">
    <property type="protein sequence ID" value="BAG34821.1"/>
    <property type="molecule type" value="mRNA"/>
</dbReference>
<dbReference type="EMBL" id="AL353778">
    <property type="status" value="NOT_ANNOTATED_CDS"/>
    <property type="molecule type" value="Genomic_DNA"/>
</dbReference>
<dbReference type="EMBL" id="CH471067">
    <property type="protein sequence ID" value="EAW91129.1"/>
    <property type="molecule type" value="Genomic_DNA"/>
</dbReference>
<dbReference type="EMBL" id="BC006243">
    <property type="protein sequence ID" value="AAH06243.1"/>
    <property type="molecule type" value="mRNA"/>
</dbReference>
<dbReference type="CCDS" id="CCDS1348.1"/>
<dbReference type="RefSeq" id="NP_002919.3">
    <property type="nucleotide sequence ID" value="NM_002928.3"/>
</dbReference>
<dbReference type="PDB" id="2BT2">
    <property type="method" value="X-ray"/>
    <property type="resolution" value="1.90 A"/>
    <property type="chains" value="A/B/C/D/E=53-190"/>
</dbReference>
<dbReference type="PDB" id="2IK8">
    <property type="method" value="X-ray"/>
    <property type="resolution" value="2.71 A"/>
    <property type="chains" value="B/D=53-190"/>
</dbReference>
<dbReference type="PDBsum" id="2BT2"/>
<dbReference type="PDBsum" id="2IK8"/>
<dbReference type="SMR" id="O15492"/>
<dbReference type="BioGRID" id="111936">
    <property type="interactions" value="15"/>
</dbReference>
<dbReference type="DIP" id="DIP-59094N"/>
<dbReference type="FunCoup" id="O15492">
    <property type="interactions" value="643"/>
</dbReference>
<dbReference type="IntAct" id="O15492">
    <property type="interactions" value="3"/>
</dbReference>
<dbReference type="STRING" id="9606.ENSP00000356529"/>
<dbReference type="BindingDB" id="O15492"/>
<dbReference type="ChEMBL" id="CHEMBL3707469"/>
<dbReference type="iPTMnet" id="O15492"/>
<dbReference type="PhosphoSitePlus" id="O15492"/>
<dbReference type="SwissPalm" id="O15492"/>
<dbReference type="BioMuta" id="RGS16"/>
<dbReference type="PaxDb" id="9606-ENSP00000356529"/>
<dbReference type="PeptideAtlas" id="O15492"/>
<dbReference type="ProteomicsDB" id="48695"/>
<dbReference type="Antibodypedia" id="34439">
    <property type="antibodies" value="361 antibodies from 25 providers"/>
</dbReference>
<dbReference type="DNASU" id="6004"/>
<dbReference type="Ensembl" id="ENST00000367558.6">
    <property type="protein sequence ID" value="ENSP00000356529.5"/>
    <property type="gene ID" value="ENSG00000143333.7"/>
</dbReference>
<dbReference type="GeneID" id="6004"/>
<dbReference type="KEGG" id="hsa:6004"/>
<dbReference type="MANE-Select" id="ENST00000367558.6">
    <property type="protein sequence ID" value="ENSP00000356529.5"/>
    <property type="RefSeq nucleotide sequence ID" value="NM_002928.4"/>
    <property type="RefSeq protein sequence ID" value="NP_002919.3"/>
</dbReference>
<dbReference type="UCSC" id="uc001gpl.5">
    <property type="organism name" value="human"/>
</dbReference>
<dbReference type="AGR" id="HGNC:9997"/>
<dbReference type="CTD" id="6004"/>
<dbReference type="DisGeNET" id="6004"/>
<dbReference type="GeneCards" id="RGS16"/>
<dbReference type="HGNC" id="HGNC:9997">
    <property type="gene designation" value="RGS16"/>
</dbReference>
<dbReference type="HPA" id="ENSG00000143333">
    <property type="expression patterns" value="Tissue enhanced (thyroid)"/>
</dbReference>
<dbReference type="MIM" id="602514">
    <property type="type" value="gene"/>
</dbReference>
<dbReference type="neXtProt" id="NX_O15492"/>
<dbReference type="OpenTargets" id="ENSG00000143333"/>
<dbReference type="PharmGKB" id="PA34367"/>
<dbReference type="VEuPathDB" id="HostDB:ENSG00000143333"/>
<dbReference type="eggNOG" id="KOG3589">
    <property type="taxonomic scope" value="Eukaryota"/>
</dbReference>
<dbReference type="GeneTree" id="ENSGT00940000154304"/>
<dbReference type="HOGENOM" id="CLU_059863_3_0_1"/>
<dbReference type="InParanoid" id="O15492"/>
<dbReference type="OMA" id="KTHTLME"/>
<dbReference type="OrthoDB" id="196547at2759"/>
<dbReference type="PAN-GO" id="O15492">
    <property type="GO annotations" value="0 GO annotations based on evolutionary models"/>
</dbReference>
<dbReference type="PhylomeDB" id="O15492"/>
<dbReference type="TreeFam" id="TF315837"/>
<dbReference type="PathwayCommons" id="O15492"/>
<dbReference type="Reactome" id="R-HSA-416476">
    <property type="pathway name" value="G alpha (q) signalling events"/>
</dbReference>
<dbReference type="Reactome" id="R-HSA-418594">
    <property type="pathway name" value="G alpha (i) signalling events"/>
</dbReference>
<dbReference type="Reactome" id="R-HSA-418597">
    <property type="pathway name" value="G alpha (z) signalling events"/>
</dbReference>
<dbReference type="SignaLink" id="O15492"/>
<dbReference type="SIGNOR" id="O15492"/>
<dbReference type="BioGRID-ORCS" id="6004">
    <property type="hits" value="11 hits in 1151 CRISPR screens"/>
</dbReference>
<dbReference type="EvolutionaryTrace" id="O15492"/>
<dbReference type="GeneWiki" id="RGS16"/>
<dbReference type="GenomeRNAi" id="6004"/>
<dbReference type="Pharos" id="O15492">
    <property type="development level" value="Tbio"/>
</dbReference>
<dbReference type="PRO" id="PR:O15492"/>
<dbReference type="Proteomes" id="UP000005640">
    <property type="component" value="Chromosome 1"/>
</dbReference>
<dbReference type="RNAct" id="O15492">
    <property type="molecule type" value="protein"/>
</dbReference>
<dbReference type="Bgee" id="ENSG00000143333">
    <property type="expression patterns" value="Expressed in lateral nuclear group of thalamus and 155 other cell types or tissues"/>
</dbReference>
<dbReference type="GO" id="GO:0005737">
    <property type="term" value="C:cytoplasm"/>
    <property type="evidence" value="ECO:0000314"/>
    <property type="project" value="CACAO"/>
</dbReference>
<dbReference type="GO" id="GO:0016020">
    <property type="term" value="C:membrane"/>
    <property type="evidence" value="ECO:0000250"/>
    <property type="project" value="UniProtKB"/>
</dbReference>
<dbReference type="GO" id="GO:0005886">
    <property type="term" value="C:plasma membrane"/>
    <property type="evidence" value="ECO:0000304"/>
    <property type="project" value="Reactome"/>
</dbReference>
<dbReference type="GO" id="GO:0005516">
    <property type="term" value="F:calmodulin binding"/>
    <property type="evidence" value="ECO:0000304"/>
    <property type="project" value="ProtInc"/>
</dbReference>
<dbReference type="GO" id="GO:0005096">
    <property type="term" value="F:GTPase activator activity"/>
    <property type="evidence" value="ECO:0000314"/>
    <property type="project" value="UniProtKB"/>
</dbReference>
<dbReference type="GO" id="GO:0003924">
    <property type="term" value="F:GTPase activity"/>
    <property type="evidence" value="ECO:0000304"/>
    <property type="project" value="Reactome"/>
</dbReference>
<dbReference type="GO" id="GO:0007186">
    <property type="term" value="P:G protein-coupled receptor signaling pathway"/>
    <property type="evidence" value="ECO:0000250"/>
    <property type="project" value="UniProtKB"/>
</dbReference>
<dbReference type="GO" id="GO:0009968">
    <property type="term" value="P:negative regulation of signal transduction"/>
    <property type="evidence" value="ECO:0007669"/>
    <property type="project" value="UniProtKB-KW"/>
</dbReference>
<dbReference type="GO" id="GO:0043547">
    <property type="term" value="P:positive regulation of GTPase activity"/>
    <property type="evidence" value="ECO:0000314"/>
    <property type="project" value="UniProtKB"/>
</dbReference>
<dbReference type="GO" id="GO:0008277">
    <property type="term" value="P:regulation of G protein-coupled receptor signaling pathway"/>
    <property type="evidence" value="ECO:0000304"/>
    <property type="project" value="ProtInc"/>
</dbReference>
<dbReference type="GO" id="GO:0007601">
    <property type="term" value="P:visual perception"/>
    <property type="evidence" value="ECO:0000304"/>
    <property type="project" value="ProtInc"/>
</dbReference>
<dbReference type="CDD" id="cd08710">
    <property type="entry name" value="RGS_RGS16"/>
    <property type="match status" value="1"/>
</dbReference>
<dbReference type="FunFam" id="1.10.167.10:FF:000001">
    <property type="entry name" value="Putative regulator of g-protein signaling 12"/>
    <property type="match status" value="1"/>
</dbReference>
<dbReference type="FunFam" id="1.10.196.10:FF:000001">
    <property type="entry name" value="Regulator of G-protein signaling 8"/>
    <property type="match status" value="1"/>
</dbReference>
<dbReference type="Gene3D" id="1.10.196.10">
    <property type="match status" value="2"/>
</dbReference>
<dbReference type="Gene3D" id="1.10.167.10">
    <property type="entry name" value="Regulator of G-protein Signalling 4, domain 2"/>
    <property type="match status" value="1"/>
</dbReference>
<dbReference type="IDEAL" id="IID00607"/>
<dbReference type="InterPro" id="IPR016137">
    <property type="entry name" value="RGS"/>
</dbReference>
<dbReference type="InterPro" id="IPR036305">
    <property type="entry name" value="RGS_sf"/>
</dbReference>
<dbReference type="InterPro" id="IPR024066">
    <property type="entry name" value="RGS_subdom1/3"/>
</dbReference>
<dbReference type="InterPro" id="IPR044926">
    <property type="entry name" value="RGS_subdomain_2"/>
</dbReference>
<dbReference type="PANTHER" id="PTHR10845">
    <property type="entry name" value="REGULATOR OF G PROTEIN SIGNALING"/>
    <property type="match status" value="1"/>
</dbReference>
<dbReference type="PANTHER" id="PTHR10845:SF187">
    <property type="entry name" value="REGULATOR OF G-PROTEIN SIGNALING 16"/>
    <property type="match status" value="1"/>
</dbReference>
<dbReference type="Pfam" id="PF00615">
    <property type="entry name" value="RGS"/>
    <property type="match status" value="1"/>
</dbReference>
<dbReference type="PRINTS" id="PR01301">
    <property type="entry name" value="RGSPROTEIN"/>
</dbReference>
<dbReference type="SMART" id="SM00315">
    <property type="entry name" value="RGS"/>
    <property type="match status" value="1"/>
</dbReference>
<dbReference type="SUPFAM" id="SSF48097">
    <property type="entry name" value="Regulator of G-protein signaling, RGS"/>
    <property type="match status" value="1"/>
</dbReference>
<dbReference type="PROSITE" id="PS50132">
    <property type="entry name" value="RGS"/>
    <property type="match status" value="1"/>
</dbReference>
<organism>
    <name type="scientific">Homo sapiens</name>
    <name type="common">Human</name>
    <dbReference type="NCBI Taxonomy" id="9606"/>
    <lineage>
        <taxon>Eukaryota</taxon>
        <taxon>Metazoa</taxon>
        <taxon>Chordata</taxon>
        <taxon>Craniata</taxon>
        <taxon>Vertebrata</taxon>
        <taxon>Euteleostomi</taxon>
        <taxon>Mammalia</taxon>
        <taxon>Eutheria</taxon>
        <taxon>Euarchontoglires</taxon>
        <taxon>Primates</taxon>
        <taxon>Haplorrhini</taxon>
        <taxon>Catarrhini</taxon>
        <taxon>Hominidae</taxon>
        <taxon>Homo</taxon>
    </lineage>
</organism>
<keyword id="KW-0002">3D-structure</keyword>
<keyword id="KW-0343">GTPase activation</keyword>
<keyword id="KW-0449">Lipoprotein</keyword>
<keyword id="KW-0472">Membrane</keyword>
<keyword id="KW-0564">Palmitate</keyword>
<keyword id="KW-0597">Phosphoprotein</keyword>
<keyword id="KW-1267">Proteomics identification</keyword>
<keyword id="KW-1185">Reference proteome</keyword>
<keyword id="KW-0734">Signal transduction inhibitor</keyword>
<reference key="1">
    <citation type="journal article" date="1997" name="Proc. Natl. Acad. Sci. U.S.A.">
        <title>The p53 tumor suppressor targets a novel regulator of G protein signaling.</title>
        <authorList>
            <person name="Buckbinder L."/>
            <person name="Velasco-Miguel S."/>
            <person name="Chen Y."/>
            <person name="Xu N."/>
            <person name="Talbott R."/>
            <person name="Gelbert L."/>
            <person name="Gao J."/>
            <person name="Seizinger B.R."/>
            <person name="Gutkind J.S."/>
            <person name="Kley N."/>
        </authorList>
    </citation>
    <scope>NUCLEOTIDE SEQUENCE [MRNA]</scope>
    <scope>VARIANT ARG-137</scope>
    <source>
        <tissue>Brain</tissue>
    </source>
</reference>
<reference key="2">
    <citation type="journal article" date="1998" name="Gene">
        <title>Cloning of a retinally abundant regulator of G-protein signaling (RGS-r/RGS16): genomic structure and chromosomal localization of the human gene.</title>
        <authorList>
            <person name="Snow B.E."/>
            <person name="Antonio L."/>
            <person name="Suggs S."/>
            <person name="Siderovski D.P."/>
        </authorList>
    </citation>
    <scope>NUCLEOTIDE SEQUENCE [GENOMIC DNA / MRNA]</scope>
    <scope>VARIANT ARG-137</scope>
    <source>
        <tissue>Retina</tissue>
    </source>
</reference>
<reference key="3">
    <citation type="submission" date="2002-03" db="EMBL/GenBank/DDBJ databases">
        <title>cDNA clones of human proteins involved in signal transduction sequenced by the Guthrie cDNA resource center (www.cdna.org).</title>
        <authorList>
            <person name="Puhl H.L. III"/>
            <person name="Ikeda S.R."/>
            <person name="Aronstam R.S."/>
        </authorList>
    </citation>
    <scope>NUCLEOTIDE SEQUENCE [LARGE SCALE MRNA]</scope>
    <scope>VARIANT ARG-137</scope>
</reference>
<reference key="4">
    <citation type="submission" date="2003-05" db="EMBL/GenBank/DDBJ databases">
        <title>Cloning of human full-length CDSs in BD Creator(TM) system donor vector.</title>
        <authorList>
            <person name="Kalnine N."/>
            <person name="Chen X."/>
            <person name="Rolfs A."/>
            <person name="Halleck A."/>
            <person name="Hines L."/>
            <person name="Eisenstein S."/>
            <person name="Koundinya M."/>
            <person name="Raphael J."/>
            <person name="Moreira D."/>
            <person name="Kelley T."/>
            <person name="LaBaer J."/>
            <person name="Lin Y."/>
            <person name="Phelan M."/>
            <person name="Farmer A."/>
        </authorList>
    </citation>
    <scope>NUCLEOTIDE SEQUENCE [LARGE SCALE MRNA]</scope>
    <scope>VARIANT ARG-137</scope>
</reference>
<reference key="5">
    <citation type="journal article" date="2004" name="Nat. Genet.">
        <title>Complete sequencing and characterization of 21,243 full-length human cDNAs.</title>
        <authorList>
            <person name="Ota T."/>
            <person name="Suzuki Y."/>
            <person name="Nishikawa T."/>
            <person name="Otsuki T."/>
            <person name="Sugiyama T."/>
            <person name="Irie R."/>
            <person name="Wakamatsu A."/>
            <person name="Hayashi K."/>
            <person name="Sato H."/>
            <person name="Nagai K."/>
            <person name="Kimura K."/>
            <person name="Makita H."/>
            <person name="Sekine M."/>
            <person name="Obayashi M."/>
            <person name="Nishi T."/>
            <person name="Shibahara T."/>
            <person name="Tanaka T."/>
            <person name="Ishii S."/>
            <person name="Yamamoto J."/>
            <person name="Saito K."/>
            <person name="Kawai Y."/>
            <person name="Isono Y."/>
            <person name="Nakamura Y."/>
            <person name="Nagahari K."/>
            <person name="Murakami K."/>
            <person name="Yasuda T."/>
            <person name="Iwayanagi T."/>
            <person name="Wagatsuma M."/>
            <person name="Shiratori A."/>
            <person name="Sudo H."/>
            <person name="Hosoiri T."/>
            <person name="Kaku Y."/>
            <person name="Kodaira H."/>
            <person name="Kondo H."/>
            <person name="Sugawara M."/>
            <person name="Takahashi M."/>
            <person name="Kanda K."/>
            <person name="Yokoi T."/>
            <person name="Furuya T."/>
            <person name="Kikkawa E."/>
            <person name="Omura Y."/>
            <person name="Abe K."/>
            <person name="Kamihara K."/>
            <person name="Katsuta N."/>
            <person name="Sato K."/>
            <person name="Tanikawa M."/>
            <person name="Yamazaki M."/>
            <person name="Ninomiya K."/>
            <person name="Ishibashi T."/>
            <person name="Yamashita H."/>
            <person name="Murakawa K."/>
            <person name="Fujimori K."/>
            <person name="Tanai H."/>
            <person name="Kimata M."/>
            <person name="Watanabe M."/>
            <person name="Hiraoka S."/>
            <person name="Chiba Y."/>
            <person name="Ishida S."/>
            <person name="Ono Y."/>
            <person name="Takiguchi S."/>
            <person name="Watanabe S."/>
            <person name="Yosida M."/>
            <person name="Hotuta T."/>
            <person name="Kusano J."/>
            <person name="Kanehori K."/>
            <person name="Takahashi-Fujii A."/>
            <person name="Hara H."/>
            <person name="Tanase T.-O."/>
            <person name="Nomura Y."/>
            <person name="Togiya S."/>
            <person name="Komai F."/>
            <person name="Hara R."/>
            <person name="Takeuchi K."/>
            <person name="Arita M."/>
            <person name="Imose N."/>
            <person name="Musashino K."/>
            <person name="Yuuki H."/>
            <person name="Oshima A."/>
            <person name="Sasaki N."/>
            <person name="Aotsuka S."/>
            <person name="Yoshikawa Y."/>
            <person name="Matsunawa H."/>
            <person name="Ichihara T."/>
            <person name="Shiohata N."/>
            <person name="Sano S."/>
            <person name="Moriya S."/>
            <person name="Momiyama H."/>
            <person name="Satoh N."/>
            <person name="Takami S."/>
            <person name="Terashima Y."/>
            <person name="Suzuki O."/>
            <person name="Nakagawa S."/>
            <person name="Senoh A."/>
            <person name="Mizoguchi H."/>
            <person name="Goto Y."/>
            <person name="Shimizu F."/>
            <person name="Wakebe H."/>
            <person name="Hishigaki H."/>
            <person name="Watanabe T."/>
            <person name="Sugiyama A."/>
            <person name="Takemoto M."/>
            <person name="Kawakami B."/>
            <person name="Yamazaki M."/>
            <person name="Watanabe K."/>
            <person name="Kumagai A."/>
            <person name="Itakura S."/>
            <person name="Fukuzumi Y."/>
            <person name="Fujimori Y."/>
            <person name="Komiyama M."/>
            <person name="Tashiro H."/>
            <person name="Tanigami A."/>
            <person name="Fujiwara T."/>
            <person name="Ono T."/>
            <person name="Yamada K."/>
            <person name="Fujii Y."/>
            <person name="Ozaki K."/>
            <person name="Hirao M."/>
            <person name="Ohmori Y."/>
            <person name="Kawabata A."/>
            <person name="Hikiji T."/>
            <person name="Kobatake N."/>
            <person name="Inagaki H."/>
            <person name="Ikema Y."/>
            <person name="Okamoto S."/>
            <person name="Okitani R."/>
            <person name="Kawakami T."/>
            <person name="Noguchi S."/>
            <person name="Itoh T."/>
            <person name="Shigeta K."/>
            <person name="Senba T."/>
            <person name="Matsumura K."/>
            <person name="Nakajima Y."/>
            <person name="Mizuno T."/>
            <person name="Morinaga M."/>
            <person name="Sasaki M."/>
            <person name="Togashi T."/>
            <person name="Oyama M."/>
            <person name="Hata H."/>
            <person name="Watanabe M."/>
            <person name="Komatsu T."/>
            <person name="Mizushima-Sugano J."/>
            <person name="Satoh T."/>
            <person name="Shirai Y."/>
            <person name="Takahashi Y."/>
            <person name="Nakagawa K."/>
            <person name="Okumura K."/>
            <person name="Nagase T."/>
            <person name="Nomura N."/>
            <person name="Kikuchi H."/>
            <person name="Masuho Y."/>
            <person name="Yamashita R."/>
            <person name="Nakai K."/>
            <person name="Yada T."/>
            <person name="Nakamura Y."/>
            <person name="Ohara O."/>
            <person name="Isogai T."/>
            <person name="Sugano S."/>
        </authorList>
    </citation>
    <scope>NUCLEOTIDE SEQUENCE [LARGE SCALE MRNA]</scope>
    <scope>VARIANT ARG-137</scope>
</reference>
<reference key="6">
    <citation type="journal article" date="2006" name="Nature">
        <title>The DNA sequence and biological annotation of human chromosome 1.</title>
        <authorList>
            <person name="Gregory S.G."/>
            <person name="Barlow K.F."/>
            <person name="McLay K.E."/>
            <person name="Kaul R."/>
            <person name="Swarbreck D."/>
            <person name="Dunham A."/>
            <person name="Scott C.E."/>
            <person name="Howe K.L."/>
            <person name="Woodfine K."/>
            <person name="Spencer C.C.A."/>
            <person name="Jones M.C."/>
            <person name="Gillson C."/>
            <person name="Searle S."/>
            <person name="Zhou Y."/>
            <person name="Kokocinski F."/>
            <person name="McDonald L."/>
            <person name="Evans R."/>
            <person name="Phillips K."/>
            <person name="Atkinson A."/>
            <person name="Cooper R."/>
            <person name="Jones C."/>
            <person name="Hall R.E."/>
            <person name="Andrews T.D."/>
            <person name="Lloyd C."/>
            <person name="Ainscough R."/>
            <person name="Almeida J.P."/>
            <person name="Ambrose K.D."/>
            <person name="Anderson F."/>
            <person name="Andrew R.W."/>
            <person name="Ashwell R.I.S."/>
            <person name="Aubin K."/>
            <person name="Babbage A.K."/>
            <person name="Bagguley C.L."/>
            <person name="Bailey J."/>
            <person name="Beasley H."/>
            <person name="Bethel G."/>
            <person name="Bird C.P."/>
            <person name="Bray-Allen S."/>
            <person name="Brown J.Y."/>
            <person name="Brown A.J."/>
            <person name="Buckley D."/>
            <person name="Burton J."/>
            <person name="Bye J."/>
            <person name="Carder C."/>
            <person name="Chapman J.C."/>
            <person name="Clark S.Y."/>
            <person name="Clarke G."/>
            <person name="Clee C."/>
            <person name="Cobley V."/>
            <person name="Collier R.E."/>
            <person name="Corby N."/>
            <person name="Coville G.J."/>
            <person name="Davies J."/>
            <person name="Deadman R."/>
            <person name="Dunn M."/>
            <person name="Earthrowl M."/>
            <person name="Ellington A.G."/>
            <person name="Errington H."/>
            <person name="Frankish A."/>
            <person name="Frankland J."/>
            <person name="French L."/>
            <person name="Garner P."/>
            <person name="Garnett J."/>
            <person name="Gay L."/>
            <person name="Ghori M.R.J."/>
            <person name="Gibson R."/>
            <person name="Gilby L.M."/>
            <person name="Gillett W."/>
            <person name="Glithero R.J."/>
            <person name="Grafham D.V."/>
            <person name="Griffiths C."/>
            <person name="Griffiths-Jones S."/>
            <person name="Grocock R."/>
            <person name="Hammond S."/>
            <person name="Harrison E.S.I."/>
            <person name="Hart E."/>
            <person name="Haugen E."/>
            <person name="Heath P.D."/>
            <person name="Holmes S."/>
            <person name="Holt K."/>
            <person name="Howden P.J."/>
            <person name="Hunt A.R."/>
            <person name="Hunt S.E."/>
            <person name="Hunter G."/>
            <person name="Isherwood J."/>
            <person name="James R."/>
            <person name="Johnson C."/>
            <person name="Johnson D."/>
            <person name="Joy A."/>
            <person name="Kay M."/>
            <person name="Kershaw J.K."/>
            <person name="Kibukawa M."/>
            <person name="Kimberley A.M."/>
            <person name="King A."/>
            <person name="Knights A.J."/>
            <person name="Lad H."/>
            <person name="Laird G."/>
            <person name="Lawlor S."/>
            <person name="Leongamornlert D.A."/>
            <person name="Lloyd D.M."/>
            <person name="Loveland J."/>
            <person name="Lovell J."/>
            <person name="Lush M.J."/>
            <person name="Lyne R."/>
            <person name="Martin S."/>
            <person name="Mashreghi-Mohammadi M."/>
            <person name="Matthews L."/>
            <person name="Matthews N.S.W."/>
            <person name="McLaren S."/>
            <person name="Milne S."/>
            <person name="Mistry S."/>
            <person name="Moore M.J.F."/>
            <person name="Nickerson T."/>
            <person name="O'Dell C.N."/>
            <person name="Oliver K."/>
            <person name="Palmeiri A."/>
            <person name="Palmer S.A."/>
            <person name="Parker A."/>
            <person name="Patel D."/>
            <person name="Pearce A.V."/>
            <person name="Peck A.I."/>
            <person name="Pelan S."/>
            <person name="Phelps K."/>
            <person name="Phillimore B.J."/>
            <person name="Plumb R."/>
            <person name="Rajan J."/>
            <person name="Raymond C."/>
            <person name="Rouse G."/>
            <person name="Saenphimmachak C."/>
            <person name="Sehra H.K."/>
            <person name="Sheridan E."/>
            <person name="Shownkeen R."/>
            <person name="Sims S."/>
            <person name="Skuce C.D."/>
            <person name="Smith M."/>
            <person name="Steward C."/>
            <person name="Subramanian S."/>
            <person name="Sycamore N."/>
            <person name="Tracey A."/>
            <person name="Tromans A."/>
            <person name="Van Helmond Z."/>
            <person name="Wall M."/>
            <person name="Wallis J.M."/>
            <person name="White S."/>
            <person name="Whitehead S.L."/>
            <person name="Wilkinson J.E."/>
            <person name="Willey D.L."/>
            <person name="Williams H."/>
            <person name="Wilming L."/>
            <person name="Wray P.W."/>
            <person name="Wu Z."/>
            <person name="Coulson A."/>
            <person name="Vaudin M."/>
            <person name="Sulston J.E."/>
            <person name="Durbin R.M."/>
            <person name="Hubbard T."/>
            <person name="Wooster R."/>
            <person name="Dunham I."/>
            <person name="Carter N.P."/>
            <person name="McVean G."/>
            <person name="Ross M.T."/>
            <person name="Harrow J."/>
            <person name="Olson M.V."/>
            <person name="Beck S."/>
            <person name="Rogers J."/>
            <person name="Bentley D.R."/>
        </authorList>
    </citation>
    <scope>NUCLEOTIDE SEQUENCE [LARGE SCALE GENOMIC DNA]</scope>
</reference>
<reference key="7">
    <citation type="submission" date="2005-07" db="EMBL/GenBank/DDBJ databases">
        <authorList>
            <person name="Mural R.J."/>
            <person name="Istrail S."/>
            <person name="Sutton G.G."/>
            <person name="Florea L."/>
            <person name="Halpern A.L."/>
            <person name="Mobarry C.M."/>
            <person name="Lippert R."/>
            <person name="Walenz B."/>
            <person name="Shatkay H."/>
            <person name="Dew I."/>
            <person name="Miller J.R."/>
            <person name="Flanigan M.J."/>
            <person name="Edwards N.J."/>
            <person name="Bolanos R."/>
            <person name="Fasulo D."/>
            <person name="Halldorsson B.V."/>
            <person name="Hannenhalli S."/>
            <person name="Turner R."/>
            <person name="Yooseph S."/>
            <person name="Lu F."/>
            <person name="Nusskern D.R."/>
            <person name="Shue B.C."/>
            <person name="Zheng X.H."/>
            <person name="Zhong F."/>
            <person name="Delcher A.L."/>
            <person name="Huson D.H."/>
            <person name="Kravitz S.A."/>
            <person name="Mouchard L."/>
            <person name="Reinert K."/>
            <person name="Remington K.A."/>
            <person name="Clark A.G."/>
            <person name="Waterman M.S."/>
            <person name="Eichler E.E."/>
            <person name="Adams M.D."/>
            <person name="Hunkapiller M.W."/>
            <person name="Myers E.W."/>
            <person name="Venter J.C."/>
        </authorList>
    </citation>
    <scope>NUCLEOTIDE SEQUENCE [LARGE SCALE GENOMIC DNA]</scope>
    <scope>VARIANT ARG-137</scope>
</reference>
<reference key="8">
    <citation type="journal article" date="2004" name="Genome Res.">
        <title>The status, quality, and expansion of the NIH full-length cDNA project: the Mammalian Gene Collection (MGC).</title>
        <authorList>
            <consortium name="The MGC Project Team"/>
        </authorList>
    </citation>
    <scope>NUCLEOTIDE SEQUENCE [LARGE SCALE MRNA]</scope>
    <scope>VARIANT ARG-137</scope>
    <source>
        <tissue>Lung</tissue>
    </source>
</reference>
<reference key="9">
    <citation type="journal article" date="2001" name="J. Biol. Chem.">
        <title>RGS16 function is regulated by epidermal growth factor receptor-mediated tyrosine phosphorylation.</title>
        <authorList>
            <person name="Derrien A."/>
            <person name="Druey K.M."/>
        </authorList>
    </citation>
    <scope>PHOSPHORYLATION AT TYR-168 BY EGFR</scope>
    <scope>FUNCTION</scope>
    <scope>PHOSPHORYLATION AT TYR-177</scope>
    <scope>MUTAGENESIS OF TYR-168 AND TYR-177</scope>
</reference>
<reference key="10">
    <citation type="journal article" date="2008" name="Proc. Natl. Acad. Sci. U.S.A.">
        <title>Structural diversity in the RGS domain and its interaction with heterotrimeric G protein alpha-subunits.</title>
        <authorList>
            <person name="Soundararajan M."/>
            <person name="Willard F.S."/>
            <person name="Kimple A.J."/>
            <person name="Turnbull A.P."/>
            <person name="Ball L.J."/>
            <person name="Schoch G.A."/>
            <person name="Gileadi C."/>
            <person name="Fedorov O.Y."/>
            <person name="Dowler E.F."/>
            <person name="Higman V.A."/>
            <person name="Hutsell S.Q."/>
            <person name="Sundstroem M."/>
            <person name="Doyle D.A."/>
            <person name="Siderovski D.P."/>
        </authorList>
    </citation>
    <scope>X-RAY CRYSTALLOGRAPHY (1.9 ANGSTROMS) OF 53-190 IN COMPLEX WITH GNAI1</scope>
    <scope>FUNCTION</scope>
    <scope>INTERACTION WITH GNAI1 AND GNAQ</scope>
</reference>
<accession>O15492</accession>
<accession>B2R4M4</accession>
<accession>Q5VYN9</accession>
<accession>Q99701</accession>